<feature type="chain" id="PRO_1000063598" description="3-isopropylmalate dehydratase large subunit">
    <location>
        <begin position="1"/>
        <end position="468"/>
    </location>
</feature>
<feature type="binding site" evidence="1">
    <location>
        <position position="349"/>
    </location>
    <ligand>
        <name>[4Fe-4S] cluster</name>
        <dbReference type="ChEBI" id="CHEBI:49883"/>
    </ligand>
</feature>
<feature type="binding site" evidence="1">
    <location>
        <position position="409"/>
    </location>
    <ligand>
        <name>[4Fe-4S] cluster</name>
        <dbReference type="ChEBI" id="CHEBI:49883"/>
    </ligand>
</feature>
<feature type="binding site" evidence="1">
    <location>
        <position position="412"/>
    </location>
    <ligand>
        <name>[4Fe-4S] cluster</name>
        <dbReference type="ChEBI" id="CHEBI:49883"/>
    </ligand>
</feature>
<dbReference type="EC" id="4.2.1.33" evidence="1"/>
<dbReference type="EMBL" id="CP000362">
    <property type="protein sequence ID" value="ABG30316.1"/>
    <property type="molecule type" value="Genomic_DNA"/>
</dbReference>
<dbReference type="RefSeq" id="WP_011566938.1">
    <property type="nucleotide sequence ID" value="NC_008209.1"/>
</dbReference>
<dbReference type="SMR" id="Q16CH7"/>
<dbReference type="STRING" id="375451.RD1_0616"/>
<dbReference type="KEGG" id="rde:RD1_0616"/>
<dbReference type="eggNOG" id="COG0065">
    <property type="taxonomic scope" value="Bacteria"/>
</dbReference>
<dbReference type="HOGENOM" id="CLU_006714_3_4_5"/>
<dbReference type="OrthoDB" id="9802769at2"/>
<dbReference type="UniPathway" id="UPA00048">
    <property type="reaction ID" value="UER00071"/>
</dbReference>
<dbReference type="Proteomes" id="UP000007029">
    <property type="component" value="Chromosome"/>
</dbReference>
<dbReference type="GO" id="GO:0003861">
    <property type="term" value="F:3-isopropylmalate dehydratase activity"/>
    <property type="evidence" value="ECO:0007669"/>
    <property type="project" value="UniProtKB-UniRule"/>
</dbReference>
<dbReference type="GO" id="GO:0051539">
    <property type="term" value="F:4 iron, 4 sulfur cluster binding"/>
    <property type="evidence" value="ECO:0007669"/>
    <property type="project" value="UniProtKB-KW"/>
</dbReference>
<dbReference type="GO" id="GO:0046872">
    <property type="term" value="F:metal ion binding"/>
    <property type="evidence" value="ECO:0007669"/>
    <property type="project" value="UniProtKB-KW"/>
</dbReference>
<dbReference type="GO" id="GO:0009098">
    <property type="term" value="P:L-leucine biosynthetic process"/>
    <property type="evidence" value="ECO:0007669"/>
    <property type="project" value="UniProtKB-UniRule"/>
</dbReference>
<dbReference type="CDD" id="cd01583">
    <property type="entry name" value="IPMI"/>
    <property type="match status" value="1"/>
</dbReference>
<dbReference type="FunFam" id="3.30.499.10:FF:000006">
    <property type="entry name" value="3-isopropylmalate dehydratase large subunit"/>
    <property type="match status" value="1"/>
</dbReference>
<dbReference type="FunFam" id="3.30.499.10:FF:000007">
    <property type="entry name" value="3-isopropylmalate dehydratase large subunit"/>
    <property type="match status" value="1"/>
</dbReference>
<dbReference type="Gene3D" id="3.30.499.10">
    <property type="entry name" value="Aconitase, domain 3"/>
    <property type="match status" value="2"/>
</dbReference>
<dbReference type="HAMAP" id="MF_01026">
    <property type="entry name" value="LeuC_type1"/>
    <property type="match status" value="1"/>
</dbReference>
<dbReference type="InterPro" id="IPR004430">
    <property type="entry name" value="3-IsopropMal_deHydase_lsu"/>
</dbReference>
<dbReference type="InterPro" id="IPR015931">
    <property type="entry name" value="Acnase/IPM_dHydase_lsu_aba_1/3"/>
</dbReference>
<dbReference type="InterPro" id="IPR001030">
    <property type="entry name" value="Acoase/IPM_deHydtase_lsu_aba"/>
</dbReference>
<dbReference type="InterPro" id="IPR018136">
    <property type="entry name" value="Aconitase_4Fe-4S_BS"/>
</dbReference>
<dbReference type="InterPro" id="IPR036008">
    <property type="entry name" value="Aconitase_4Fe-4S_dom"/>
</dbReference>
<dbReference type="InterPro" id="IPR050067">
    <property type="entry name" value="IPM_dehydratase_rel_enz"/>
</dbReference>
<dbReference type="InterPro" id="IPR033941">
    <property type="entry name" value="IPMI_cat"/>
</dbReference>
<dbReference type="NCBIfam" id="TIGR00170">
    <property type="entry name" value="leuC"/>
    <property type="match status" value="1"/>
</dbReference>
<dbReference type="NCBIfam" id="NF004016">
    <property type="entry name" value="PRK05478.1"/>
    <property type="match status" value="1"/>
</dbReference>
<dbReference type="NCBIfam" id="NF009116">
    <property type="entry name" value="PRK12466.1"/>
    <property type="match status" value="1"/>
</dbReference>
<dbReference type="PANTHER" id="PTHR43822:SF9">
    <property type="entry name" value="3-ISOPROPYLMALATE DEHYDRATASE"/>
    <property type="match status" value="1"/>
</dbReference>
<dbReference type="PANTHER" id="PTHR43822">
    <property type="entry name" value="HOMOACONITASE, MITOCHONDRIAL-RELATED"/>
    <property type="match status" value="1"/>
</dbReference>
<dbReference type="Pfam" id="PF00330">
    <property type="entry name" value="Aconitase"/>
    <property type="match status" value="1"/>
</dbReference>
<dbReference type="PRINTS" id="PR00415">
    <property type="entry name" value="ACONITASE"/>
</dbReference>
<dbReference type="SUPFAM" id="SSF53732">
    <property type="entry name" value="Aconitase iron-sulfur domain"/>
    <property type="match status" value="1"/>
</dbReference>
<dbReference type="PROSITE" id="PS00450">
    <property type="entry name" value="ACONITASE_1"/>
    <property type="match status" value="1"/>
</dbReference>
<dbReference type="PROSITE" id="PS01244">
    <property type="entry name" value="ACONITASE_2"/>
    <property type="match status" value="1"/>
</dbReference>
<gene>
    <name evidence="1" type="primary">leuC</name>
    <name type="ordered locus">RD1_0616</name>
</gene>
<evidence type="ECO:0000255" key="1">
    <source>
        <dbReference type="HAMAP-Rule" id="MF_01026"/>
    </source>
</evidence>
<organism>
    <name type="scientific">Roseobacter denitrificans (strain ATCC 33942 / OCh 114)</name>
    <name type="common">Erythrobacter sp. (strain OCh 114)</name>
    <name type="synonym">Roseobacter denitrificans</name>
    <dbReference type="NCBI Taxonomy" id="375451"/>
    <lineage>
        <taxon>Bacteria</taxon>
        <taxon>Pseudomonadati</taxon>
        <taxon>Pseudomonadota</taxon>
        <taxon>Alphaproteobacteria</taxon>
        <taxon>Rhodobacterales</taxon>
        <taxon>Roseobacteraceae</taxon>
        <taxon>Roseobacter</taxon>
    </lineage>
</organism>
<comment type="function">
    <text evidence="1">Catalyzes the isomerization between 2-isopropylmalate and 3-isopropylmalate, via the formation of 2-isopropylmaleate.</text>
</comment>
<comment type="catalytic activity">
    <reaction evidence="1">
        <text>(2R,3S)-3-isopropylmalate = (2S)-2-isopropylmalate</text>
        <dbReference type="Rhea" id="RHEA:32287"/>
        <dbReference type="ChEBI" id="CHEBI:1178"/>
        <dbReference type="ChEBI" id="CHEBI:35121"/>
        <dbReference type="EC" id="4.2.1.33"/>
    </reaction>
</comment>
<comment type="cofactor">
    <cofactor evidence="1">
        <name>[4Fe-4S] cluster</name>
        <dbReference type="ChEBI" id="CHEBI:49883"/>
    </cofactor>
    <text evidence="1">Binds 1 [4Fe-4S] cluster per subunit.</text>
</comment>
<comment type="pathway">
    <text evidence="1">Amino-acid biosynthesis; L-leucine biosynthesis; L-leucine from 3-methyl-2-oxobutanoate: step 2/4.</text>
</comment>
<comment type="subunit">
    <text evidence="1">Heterodimer of LeuC and LeuD.</text>
</comment>
<comment type="similarity">
    <text evidence="1">Belongs to the aconitase/IPM isomerase family. LeuC type 1 subfamily.</text>
</comment>
<accession>Q16CH7</accession>
<keyword id="KW-0004">4Fe-4S</keyword>
<keyword id="KW-0028">Amino-acid biosynthesis</keyword>
<keyword id="KW-0100">Branched-chain amino acid biosynthesis</keyword>
<keyword id="KW-0408">Iron</keyword>
<keyword id="KW-0411">Iron-sulfur</keyword>
<keyword id="KW-0432">Leucine biosynthesis</keyword>
<keyword id="KW-0456">Lyase</keyword>
<keyword id="KW-0479">Metal-binding</keyword>
<keyword id="KW-1185">Reference proteome</keyword>
<sequence>MSPKTLYDKIWDAHVAHEADDGTTLLYIDRHLVHEVTSPQAFEGLRMTGRTVRAPDKTIAVPDHNVPTTLGREKADNMTEDSRIQVAALDTNAKEFGIHYYPVSDIRQGIVHIVGPEQGWTLPGMTVVCGDSHTATHGAFGALAHGIGTSEVEHVLATQTLIQKKSKNMKVEITGKLRPGVTAKDITLSVIGHTGTAGGTGYVIEYCGEAIRDLSMEGRMTVCNMAIEGGARAGLIAPDEKTFEYCMGRPHAPKGAQWEAAMSWWKTLYSDDDAHWDKVITIKGDDIAPVVTWGTSPEDVLPITASVPKPEDFTGGKVGAVQRSLEYMGLTSGTPLSEVEIDTVFIGSCTNGRIEDLRAAAEILKGKKKKDGLRAMVVPGSGLVRAQAEEEGLADIFKEAGFEWRLAGCSMCLAMNPDQLQPGERCAATSNRNFEGRQGRGGRTHLMSPAMAAAAAITGRLTDVRDLM</sequence>
<name>LEUC_ROSDO</name>
<reference key="1">
    <citation type="journal article" date="2007" name="J. Bacteriol.">
        <title>The complete genome sequence of Roseobacter denitrificans reveals a mixotrophic rather than photosynthetic metabolism.</title>
        <authorList>
            <person name="Swingley W.D."/>
            <person name="Sadekar S."/>
            <person name="Mastrian S.D."/>
            <person name="Matthies H.J."/>
            <person name="Hao J."/>
            <person name="Ramos H."/>
            <person name="Acharya C.R."/>
            <person name="Conrad A.L."/>
            <person name="Taylor H.L."/>
            <person name="Dejesa L.C."/>
            <person name="Shah M.K."/>
            <person name="O'Huallachain M.E."/>
            <person name="Lince M.T."/>
            <person name="Blankenship R.E."/>
            <person name="Beatty J.T."/>
            <person name="Touchman J.W."/>
        </authorList>
    </citation>
    <scope>NUCLEOTIDE SEQUENCE [LARGE SCALE GENOMIC DNA]</scope>
    <source>
        <strain>ATCC 33942 / OCh 114</strain>
    </source>
</reference>
<proteinExistence type="inferred from homology"/>
<protein>
    <recommendedName>
        <fullName evidence="1">3-isopropylmalate dehydratase large subunit</fullName>
        <ecNumber evidence="1">4.2.1.33</ecNumber>
    </recommendedName>
    <alternativeName>
        <fullName evidence="1">Alpha-IPM isomerase</fullName>
        <shortName evidence="1">IPMI</shortName>
    </alternativeName>
    <alternativeName>
        <fullName evidence="1">Isopropylmalate isomerase</fullName>
    </alternativeName>
</protein>